<organism>
    <name type="scientific">Salmonella typhi</name>
    <dbReference type="NCBI Taxonomy" id="90370"/>
    <lineage>
        <taxon>Bacteria</taxon>
        <taxon>Pseudomonadati</taxon>
        <taxon>Pseudomonadota</taxon>
        <taxon>Gammaproteobacteria</taxon>
        <taxon>Enterobacterales</taxon>
        <taxon>Enterobacteriaceae</taxon>
        <taxon>Salmonella</taxon>
    </lineage>
</organism>
<gene>
    <name type="primary">recX</name>
    <name type="ordered locus">STY2949</name>
    <name type="ordered locus">t2729</name>
</gene>
<dbReference type="EMBL" id="AL513382">
    <property type="protein sequence ID" value="CAD05934.1"/>
    <property type="molecule type" value="Genomic_DNA"/>
</dbReference>
<dbReference type="EMBL" id="AE014613">
    <property type="protein sequence ID" value="AAO70290.1"/>
    <property type="molecule type" value="Genomic_DNA"/>
</dbReference>
<dbReference type="RefSeq" id="NP_457221.1">
    <property type="nucleotide sequence ID" value="NC_003198.1"/>
</dbReference>
<dbReference type="RefSeq" id="WP_001294863.1">
    <property type="nucleotide sequence ID" value="NZ_WSUR01000005.1"/>
</dbReference>
<dbReference type="SMR" id="Q8Z4D4"/>
<dbReference type="STRING" id="220341.gene:17586844"/>
<dbReference type="KEGG" id="stt:t2729"/>
<dbReference type="KEGG" id="sty:STY2949"/>
<dbReference type="PATRIC" id="fig|220341.7.peg.3004"/>
<dbReference type="eggNOG" id="COG2137">
    <property type="taxonomic scope" value="Bacteria"/>
</dbReference>
<dbReference type="HOGENOM" id="CLU_066607_3_2_6"/>
<dbReference type="OMA" id="EPQDWFE"/>
<dbReference type="OrthoDB" id="7066780at2"/>
<dbReference type="Proteomes" id="UP000000541">
    <property type="component" value="Chromosome"/>
</dbReference>
<dbReference type="Proteomes" id="UP000002670">
    <property type="component" value="Chromosome"/>
</dbReference>
<dbReference type="GO" id="GO:0005737">
    <property type="term" value="C:cytoplasm"/>
    <property type="evidence" value="ECO:0007669"/>
    <property type="project" value="UniProtKB-SubCell"/>
</dbReference>
<dbReference type="GO" id="GO:0006282">
    <property type="term" value="P:regulation of DNA repair"/>
    <property type="evidence" value="ECO:0007669"/>
    <property type="project" value="UniProtKB-UniRule"/>
</dbReference>
<dbReference type="FunFam" id="1.10.10.10:FF:000133">
    <property type="entry name" value="Regulatory protein RecX"/>
    <property type="match status" value="1"/>
</dbReference>
<dbReference type="FunFam" id="1.10.10.10:FF:000134">
    <property type="entry name" value="Regulatory protein RecX"/>
    <property type="match status" value="1"/>
</dbReference>
<dbReference type="Gene3D" id="1.10.10.10">
    <property type="entry name" value="Winged helix-like DNA-binding domain superfamily/Winged helix DNA-binding domain"/>
    <property type="match status" value="3"/>
</dbReference>
<dbReference type="HAMAP" id="MF_01114">
    <property type="entry name" value="RecX"/>
    <property type="match status" value="1"/>
</dbReference>
<dbReference type="InterPro" id="IPR053926">
    <property type="entry name" value="RecX_HTH_1st"/>
</dbReference>
<dbReference type="InterPro" id="IPR053924">
    <property type="entry name" value="RecX_HTH_2nd"/>
</dbReference>
<dbReference type="InterPro" id="IPR053925">
    <property type="entry name" value="RecX_HTH_3rd"/>
</dbReference>
<dbReference type="InterPro" id="IPR003783">
    <property type="entry name" value="Regulatory_RecX"/>
</dbReference>
<dbReference type="InterPro" id="IPR036388">
    <property type="entry name" value="WH-like_DNA-bd_sf"/>
</dbReference>
<dbReference type="NCBIfam" id="NF001052">
    <property type="entry name" value="PRK00117.1-1"/>
    <property type="match status" value="1"/>
</dbReference>
<dbReference type="PANTHER" id="PTHR33602">
    <property type="entry name" value="REGULATORY PROTEIN RECX FAMILY PROTEIN"/>
    <property type="match status" value="1"/>
</dbReference>
<dbReference type="PANTHER" id="PTHR33602:SF1">
    <property type="entry name" value="REGULATORY PROTEIN RECX FAMILY PROTEIN"/>
    <property type="match status" value="1"/>
</dbReference>
<dbReference type="Pfam" id="PF21982">
    <property type="entry name" value="RecX_HTH1"/>
    <property type="match status" value="1"/>
</dbReference>
<dbReference type="Pfam" id="PF02631">
    <property type="entry name" value="RecX_HTH2"/>
    <property type="match status" value="1"/>
</dbReference>
<dbReference type="Pfam" id="PF21981">
    <property type="entry name" value="RecX_HTH3"/>
    <property type="match status" value="1"/>
</dbReference>
<name>RECX_SALTI</name>
<sequence>MSEPTSRRPAYARLLDRAVRILAVRDHSEQELRRKLSAPVMGKNGPEEIDATADDYERVIAWCHEHHYLDDERFVMRFIASRSRKGYGPARIRQELNQKGISRESTEKAMRECEIDWSEMAREQAVRKYGEPLPSNFSEKVKVQRFLLYRGYLMDDIQQIWRNFAD</sequence>
<comment type="function">
    <text evidence="1">Modulates RecA activity.</text>
</comment>
<comment type="subcellular location">
    <subcellularLocation>
        <location evidence="2">Cytoplasm</location>
    </subcellularLocation>
</comment>
<comment type="similarity">
    <text evidence="2">Belongs to the RecX family.</text>
</comment>
<protein>
    <recommendedName>
        <fullName>Regulatory protein RecX</fullName>
    </recommendedName>
</protein>
<feature type="chain" id="PRO_0000162465" description="Regulatory protein RecX">
    <location>
        <begin position="1"/>
        <end position="166"/>
    </location>
</feature>
<evidence type="ECO:0000250" key="1"/>
<evidence type="ECO:0000305" key="2"/>
<accession>Q8Z4D4</accession>
<proteinExistence type="inferred from homology"/>
<reference key="1">
    <citation type="journal article" date="2001" name="Nature">
        <title>Complete genome sequence of a multiple drug resistant Salmonella enterica serovar Typhi CT18.</title>
        <authorList>
            <person name="Parkhill J."/>
            <person name="Dougan G."/>
            <person name="James K.D."/>
            <person name="Thomson N.R."/>
            <person name="Pickard D."/>
            <person name="Wain J."/>
            <person name="Churcher C.M."/>
            <person name="Mungall K.L."/>
            <person name="Bentley S.D."/>
            <person name="Holden M.T.G."/>
            <person name="Sebaihia M."/>
            <person name="Baker S."/>
            <person name="Basham D."/>
            <person name="Brooks K."/>
            <person name="Chillingworth T."/>
            <person name="Connerton P."/>
            <person name="Cronin A."/>
            <person name="Davis P."/>
            <person name="Davies R.M."/>
            <person name="Dowd L."/>
            <person name="White N."/>
            <person name="Farrar J."/>
            <person name="Feltwell T."/>
            <person name="Hamlin N."/>
            <person name="Haque A."/>
            <person name="Hien T.T."/>
            <person name="Holroyd S."/>
            <person name="Jagels K."/>
            <person name="Krogh A."/>
            <person name="Larsen T.S."/>
            <person name="Leather S."/>
            <person name="Moule S."/>
            <person name="O'Gaora P."/>
            <person name="Parry C."/>
            <person name="Quail M.A."/>
            <person name="Rutherford K.M."/>
            <person name="Simmonds M."/>
            <person name="Skelton J."/>
            <person name="Stevens K."/>
            <person name="Whitehead S."/>
            <person name="Barrell B.G."/>
        </authorList>
    </citation>
    <scope>NUCLEOTIDE SEQUENCE [LARGE SCALE GENOMIC DNA]</scope>
    <source>
        <strain>CT18</strain>
    </source>
</reference>
<reference key="2">
    <citation type="journal article" date="2003" name="J. Bacteriol.">
        <title>Comparative genomics of Salmonella enterica serovar Typhi strains Ty2 and CT18.</title>
        <authorList>
            <person name="Deng W."/>
            <person name="Liou S.-R."/>
            <person name="Plunkett G. III"/>
            <person name="Mayhew G.F."/>
            <person name="Rose D.J."/>
            <person name="Burland V."/>
            <person name="Kodoyianni V."/>
            <person name="Schwartz D.C."/>
            <person name="Blattner F.R."/>
        </authorList>
    </citation>
    <scope>NUCLEOTIDE SEQUENCE [LARGE SCALE GENOMIC DNA]</scope>
    <source>
        <strain>ATCC 700931 / Ty2</strain>
    </source>
</reference>
<keyword id="KW-0963">Cytoplasm</keyword>